<feature type="chain" id="PRO_1000194804" description="DNA-directed RNA polymerase subunit omega">
    <location>
        <begin position="1"/>
        <end position="110"/>
    </location>
</feature>
<accession>B8ZUM0</accession>
<name>RPOZ_MYCLB</name>
<evidence type="ECO:0000255" key="1">
    <source>
        <dbReference type="HAMAP-Rule" id="MF_00366"/>
    </source>
</evidence>
<keyword id="KW-0240">DNA-directed RNA polymerase</keyword>
<keyword id="KW-0548">Nucleotidyltransferase</keyword>
<keyword id="KW-0804">Transcription</keyword>
<keyword id="KW-0808">Transferase</keyword>
<protein>
    <recommendedName>
        <fullName evidence="1">DNA-directed RNA polymerase subunit omega</fullName>
        <shortName evidence="1">RNAP omega subunit</shortName>
        <ecNumber evidence="1">2.7.7.6</ecNumber>
    </recommendedName>
    <alternativeName>
        <fullName evidence="1">RNA polymerase omega subunit</fullName>
    </alternativeName>
    <alternativeName>
        <fullName evidence="1">Transcriptase subunit omega</fullName>
    </alternativeName>
</protein>
<gene>
    <name evidence="1" type="primary">rpoZ</name>
    <name type="ordered locus">MLBr00542</name>
</gene>
<reference key="1">
    <citation type="journal article" date="2009" name="Nat. Genet.">
        <title>Comparative genomic and phylogeographic analysis of Mycobacterium leprae.</title>
        <authorList>
            <person name="Monot M."/>
            <person name="Honore N."/>
            <person name="Garnier T."/>
            <person name="Zidane N."/>
            <person name="Sherafi D."/>
            <person name="Paniz-Mondolfi A."/>
            <person name="Matsuoka M."/>
            <person name="Taylor G.M."/>
            <person name="Donoghue H.D."/>
            <person name="Bouwman A."/>
            <person name="Mays S."/>
            <person name="Watson C."/>
            <person name="Lockwood D."/>
            <person name="Khamispour A."/>
            <person name="Dowlati Y."/>
            <person name="Jianping S."/>
            <person name="Rea T.H."/>
            <person name="Vera-Cabrera L."/>
            <person name="Stefani M.M."/>
            <person name="Banu S."/>
            <person name="Macdonald M."/>
            <person name="Sapkota B.R."/>
            <person name="Spencer J.S."/>
            <person name="Thomas J."/>
            <person name="Harshman K."/>
            <person name="Singh P."/>
            <person name="Busso P."/>
            <person name="Gattiker A."/>
            <person name="Rougemont J."/>
            <person name="Brennan P.J."/>
            <person name="Cole S.T."/>
        </authorList>
    </citation>
    <scope>NUCLEOTIDE SEQUENCE [LARGE SCALE GENOMIC DNA]</scope>
    <source>
        <strain>Br4923</strain>
    </source>
</reference>
<organism>
    <name type="scientific">Mycobacterium leprae (strain Br4923)</name>
    <dbReference type="NCBI Taxonomy" id="561304"/>
    <lineage>
        <taxon>Bacteria</taxon>
        <taxon>Bacillati</taxon>
        <taxon>Actinomycetota</taxon>
        <taxon>Actinomycetes</taxon>
        <taxon>Mycobacteriales</taxon>
        <taxon>Mycobacteriaceae</taxon>
        <taxon>Mycobacterium</taxon>
    </lineage>
</organism>
<comment type="function">
    <text evidence="1">Promotes RNA polymerase assembly. Latches the N- and C-terminal regions of the beta' subunit thereby facilitating its interaction with the beta and alpha subunits.</text>
</comment>
<comment type="catalytic activity">
    <reaction evidence="1">
        <text>RNA(n) + a ribonucleoside 5'-triphosphate = RNA(n+1) + diphosphate</text>
        <dbReference type="Rhea" id="RHEA:21248"/>
        <dbReference type="Rhea" id="RHEA-COMP:14527"/>
        <dbReference type="Rhea" id="RHEA-COMP:17342"/>
        <dbReference type="ChEBI" id="CHEBI:33019"/>
        <dbReference type="ChEBI" id="CHEBI:61557"/>
        <dbReference type="ChEBI" id="CHEBI:140395"/>
        <dbReference type="EC" id="2.7.7.6"/>
    </reaction>
</comment>
<comment type="subunit">
    <text evidence="1">The RNAP catalytic core consists of 2 alpha, 1 beta, 1 beta' and 1 omega subunit. When a sigma factor is associated with the core the holoenzyme is formed, which can initiate transcription.</text>
</comment>
<comment type="similarity">
    <text evidence="1">Belongs to the RNA polymerase subunit omega family.</text>
</comment>
<dbReference type="EC" id="2.7.7.6" evidence="1"/>
<dbReference type="EMBL" id="FM211192">
    <property type="protein sequence ID" value="CAR70635.1"/>
    <property type="molecule type" value="Genomic_DNA"/>
</dbReference>
<dbReference type="SMR" id="B8ZUM0"/>
<dbReference type="KEGG" id="mlb:MLBr00542"/>
<dbReference type="HOGENOM" id="CLU_125406_1_1_11"/>
<dbReference type="Proteomes" id="UP000006900">
    <property type="component" value="Chromosome"/>
</dbReference>
<dbReference type="GO" id="GO:0000428">
    <property type="term" value="C:DNA-directed RNA polymerase complex"/>
    <property type="evidence" value="ECO:0007669"/>
    <property type="project" value="UniProtKB-KW"/>
</dbReference>
<dbReference type="GO" id="GO:0003677">
    <property type="term" value="F:DNA binding"/>
    <property type="evidence" value="ECO:0007669"/>
    <property type="project" value="UniProtKB-UniRule"/>
</dbReference>
<dbReference type="GO" id="GO:0003899">
    <property type="term" value="F:DNA-directed RNA polymerase activity"/>
    <property type="evidence" value="ECO:0007669"/>
    <property type="project" value="UniProtKB-UniRule"/>
</dbReference>
<dbReference type="GO" id="GO:0006351">
    <property type="term" value="P:DNA-templated transcription"/>
    <property type="evidence" value="ECO:0007669"/>
    <property type="project" value="UniProtKB-UniRule"/>
</dbReference>
<dbReference type="FunFam" id="3.90.940.10:FF:000002">
    <property type="entry name" value="DNA-directed RNA polymerase subunit omega"/>
    <property type="match status" value="1"/>
</dbReference>
<dbReference type="Gene3D" id="3.90.940.10">
    <property type="match status" value="1"/>
</dbReference>
<dbReference type="HAMAP" id="MF_00366">
    <property type="entry name" value="RNApol_bact_RpoZ"/>
    <property type="match status" value="1"/>
</dbReference>
<dbReference type="InterPro" id="IPR003716">
    <property type="entry name" value="DNA-dir_RNA_pol_omega"/>
</dbReference>
<dbReference type="InterPro" id="IPR006110">
    <property type="entry name" value="Pol_omega/Rpo6/RPB6"/>
</dbReference>
<dbReference type="InterPro" id="IPR036161">
    <property type="entry name" value="RPB6/omega-like_sf"/>
</dbReference>
<dbReference type="NCBIfam" id="TIGR00690">
    <property type="entry name" value="rpoZ"/>
    <property type="match status" value="1"/>
</dbReference>
<dbReference type="PANTHER" id="PTHR34476">
    <property type="entry name" value="DNA-DIRECTED RNA POLYMERASE SUBUNIT OMEGA"/>
    <property type="match status" value="1"/>
</dbReference>
<dbReference type="PANTHER" id="PTHR34476:SF1">
    <property type="entry name" value="DNA-DIRECTED RNA POLYMERASE SUBUNIT OMEGA"/>
    <property type="match status" value="1"/>
</dbReference>
<dbReference type="Pfam" id="PF01192">
    <property type="entry name" value="RNA_pol_Rpb6"/>
    <property type="match status" value="1"/>
</dbReference>
<dbReference type="SMART" id="SM01409">
    <property type="entry name" value="RNA_pol_Rpb6"/>
    <property type="match status" value="1"/>
</dbReference>
<dbReference type="SUPFAM" id="SSF63562">
    <property type="entry name" value="RPB6/omega subunit-like"/>
    <property type="match status" value="1"/>
</dbReference>
<sequence length="110" mass="11974">MSIPQSNTSLSAVIAVDQFDPSSGGQGVYDTPLGITNPPIDELLDRVSSKYALVIYAAKRARQINDHYNQLGEGILEYVGPLVEPGLQEKPLSIAMREIHADLLEHTEGE</sequence>
<proteinExistence type="inferred from homology"/>